<comment type="function">
    <text evidence="2 14 17 18 23 25">Catalytic component of a P4-ATPase flippase complex which catalyzes the hydrolysis of ATP coupled to the transport of phospholipids, in particular phosphatidylcholines (PC), from the outer to the inner leaflet of the plasma membrane (PubMed:17948906, PubMed:25315773). May participate in the establishment of the canalicular membrane integrity by ensuring asymmetric distribution of phospholipids in the canicular membrane (By similarity). Thus may have a role in the regulation of bile acids transport into the canaliculus, uptake of bile acids from intestinal contents into intestinal mucosa or both and protect hepatocytes from bile salts (By similarity). Involved in the microvillus formation in polarized epithelial cells; the function seems to be independent from its flippase activity (PubMed:20512993). Participates in correct apical membrane localization of CDC42, CFTR and SLC10A2 (PubMed:25239307, PubMed:27301931). Enables CDC42 clustering at the apical membrane during enterocyte polarization through the interaction between CDC42 polybasic region and negatively charged membrane lipids provided by ATP8B1 (By similarity). Together with TMEM30A is involved in uptake of the synthetic drug alkylphospholipid perifosine (PubMed:20510206). Required for the preservation of cochlear hair cells in the inner ear (By similarity). May act as cardiolipin transporter during inflammatory injury (By similarity).</text>
</comment>
<comment type="catalytic activity">
    <reaction evidence="14 24">
        <text>ATP + H2O + phospholipidSide 1 = ADP + phosphate + phospholipidSide 2.</text>
        <dbReference type="EC" id="7.6.2.1"/>
    </reaction>
</comment>
<comment type="catalytic activity">
    <reaction evidence="24">
        <text>a 1,2-diacyl-sn-glycero-3-phosphocholine(out) + ATP + H2O = a 1,2-diacyl-sn-glycero-3-phosphocholine(in) + ADP + phosphate + H(+)</text>
        <dbReference type="Rhea" id="RHEA:38583"/>
        <dbReference type="ChEBI" id="CHEBI:15377"/>
        <dbReference type="ChEBI" id="CHEBI:15378"/>
        <dbReference type="ChEBI" id="CHEBI:30616"/>
        <dbReference type="ChEBI" id="CHEBI:43474"/>
        <dbReference type="ChEBI" id="CHEBI:57643"/>
        <dbReference type="ChEBI" id="CHEBI:456216"/>
    </reaction>
    <physiologicalReaction direction="left-to-right" evidence="30">
        <dbReference type="Rhea" id="RHEA:38584"/>
    </physiologicalReaction>
</comment>
<comment type="catalytic activity">
    <reaction evidence="14">
        <text>a 1,2-diacyl-sn-glycero-3-phospho-L-serine(out) + ATP + H2O = a 1,2-diacyl-sn-glycero-3-phospho-L-serine(in) + ADP + phosphate + H(+)</text>
        <dbReference type="Rhea" id="RHEA:38567"/>
        <dbReference type="ChEBI" id="CHEBI:15377"/>
        <dbReference type="ChEBI" id="CHEBI:15378"/>
        <dbReference type="ChEBI" id="CHEBI:30616"/>
        <dbReference type="ChEBI" id="CHEBI:43474"/>
        <dbReference type="ChEBI" id="CHEBI:57262"/>
        <dbReference type="ChEBI" id="CHEBI:456216"/>
    </reaction>
    <physiologicalReaction direction="left-to-right" evidence="29">
        <dbReference type="Rhea" id="RHEA:38568"/>
    </physiologicalReaction>
</comment>
<comment type="cofactor">
    <cofactor evidence="5">
        <name>Mg(2+)</name>
        <dbReference type="ChEBI" id="CHEBI:18420"/>
    </cofactor>
</comment>
<comment type="subunit">
    <text evidence="14 19 20 21 23">Component of a P4-ATPase flippase complex which consists of a catalytic alpha subunit ATP8B1 and an accessory beta subunit TMEM30A (PubMed:17948906, PubMed:25239307). The flippase ATP8B1:TMEM30A complex can form an intermediate phosphoenzyme in vitro (PubMed:20947505, PubMed:20961850, PubMed:21914794). Also interacts with beta subunit TMEM30B (PubMed:20947505, PubMed:20961850, PubMed:21914794).</text>
</comment>
<comment type="interaction">
    <interactant intactId="EBI-9524729">
        <id>O43520</id>
    </interactant>
    <interactant intactId="EBI-2836942">
        <id>Q9NV96</id>
        <label>TMEM30A</label>
    </interactant>
    <organismsDiffer>false</organismsDiffer>
    <experiments>9</experiments>
</comment>
<comment type="interaction">
    <interactant intactId="EBI-9524729">
        <id>O43520</id>
    </interactant>
    <interactant intactId="EBI-9527107">
        <id>Q3MIR4</id>
        <label>TMEM30B</label>
    </interactant>
    <organismsDiffer>false</organismsDiffer>
    <experiments>5</experiments>
</comment>
<comment type="subcellular location">
    <subcellularLocation>
        <location evidence="14 19 20 21 24">Cell membrane</location>
        <topology>Multi-pass membrane protein</topology>
    </subcellularLocation>
    <subcellularLocation>
        <location evidence="18">Apical cell membrane</location>
    </subcellularLocation>
    <subcellularLocation>
        <location evidence="2">Cell projection</location>
        <location evidence="2">Stereocilium</location>
    </subcellularLocation>
    <subcellularLocation>
        <location evidence="14 19 20 21">Endoplasmic reticulum</location>
    </subcellularLocation>
    <subcellularLocation>
        <location evidence="20">Golgi apparatus</location>
    </subcellularLocation>
    <text evidence="18 19">Exit from the endoplasmic reticulum requires the presence of TMEM30A or TMEM30B (PubMed:20947505). Localizes to apical membranes in epithelial cells (PubMed:20512993).</text>
</comment>
<comment type="tissue specificity">
    <text>Found in most tissues except brain and skeletal muscle. Most abundant in pancreas and small intestine.</text>
</comment>
<comment type="disease" evidence="8 9 15 16 22 24 26">
    <disease id="DI-00949">
        <name>Cholestasis, progressive familial intrahepatic, 1</name>
        <acronym>PFIC1</acronym>
        <description>A disorder characterized by early onset of cholestasis that progresses to hepatic fibrosis, cirrhosis, and end-stage liver disease before adulthood. PFIC1 inheritance is autosomal recessive.</description>
        <dbReference type="MIM" id="211600"/>
    </disease>
    <text>The disease is caused by variants affecting the gene represented in this entry.</text>
</comment>
<comment type="disease" evidence="9 15 24 26 27">
    <disease id="DI-00185">
        <name>Cholestasis, benign recurrent intrahepatic, 1</name>
        <acronym>BRIC1</acronym>
        <description>A disorder characterized by intermittent episodes of cholestasis without progression to liver failure. There is initial elevation of serum bile acids, followed by cholestatic jaundice which generally spontaneously resolves after periods of weeks to months. The cholestatic attacks vary in severity and duration. Patients are asymptomatic between episodes, both clinically and biochemically.</description>
        <dbReference type="MIM" id="243300"/>
    </disease>
    <text>The disease is caused by variants affecting the gene represented in this entry.</text>
</comment>
<comment type="disease" evidence="11 12 15">
    <disease id="DI-00600">
        <name>Cholestasis of pregnancy, intrahepatic 1</name>
        <acronym>ICP1</acronym>
        <description>A liver disorder of pregnancy. It presents during the second or, more commonly, the third trimester of pregnancy with intense pruritus which becomes more severe with advancing gestation and cholestasis. Cholestasis results from abnormal biliary transport from the liver into the small intestine. ICP1 causes fetal distress, spontaneous premature delivery and intrauterine death. ICP1 patients have spontaneous and progressive disappearance of cholestasis after delivery.</description>
        <dbReference type="MIM" id="147480"/>
    </disease>
    <text>The disease may be caused by variants affecting the gene represented in this entry.</text>
</comment>
<comment type="similarity">
    <text evidence="28">Belongs to the cation transport ATPase (P-type) (TC 3.A.3) family. Type IV subfamily.</text>
</comment>
<gene>
    <name evidence="31" type="primary">ATP8B1</name>
    <name type="synonym">ATPIC</name>
    <name type="synonym">FIC1</name>
    <name type="synonym">PFIC</name>
</gene>
<sequence length="1251" mass="143695">MSTERDSETTFDEDSQPNDEVVPYSDDETEDELDDQGSAVEPEQNRVNREAEENREPFRKECTWQVKANDRKYHEQPHFMNTKFLCIKESKYANNAIKTYKYNAFTFIPMNLFEQFKRAANLYFLALLILQAVPQISTLAWYTTLVPLLVVLGVTAIKDLVDDVARHKMDKEINNRTCEVIKDGRFKVAKWKEIQVGDVIRLKKNDFVPADILLLSSSEPNSLCYVETAELDGETNLKFKMSLEITDQYLQREDTLATFDGFIECEEPNNRLDKFTGTLFWRNTSFPLDADKILLRGCVIRNTDFCHGLVIFAGADTKIMKNSGKTRFKRTKIDYLMNYMVYTIFVVLILLSAGLAIGHAYWEAQVGNSSWYLYDGEDDTPSYRGFLIFWGYIIVLNTMVPISLYVSVEVIRLGQSHFINWDLQMYYAEKDTPAKARTTTLNEQLGQIHYIFSDKTGTLTQNIMTFKKCCINGQIYGDHRDASQHNHNKIEQVDFSWNTYADGKLAFYDHYLIEQIQSGKEPEVRQFFFLLAVCHTVMVDRTDGQLNYQAASPDEGALVNAARNFGFAFLARTQNTITISELGTERTYNVLAILDFNSDRKRMSIIVRTPEGNIKLYCKGADTVIYERLHRMNPTKQETQDALDIFANETLRTLCLCYKEIEEKEFTEWNKKFMAASVASTNRDEALDKVYEEIEKDLILLGATAIEDKLQDGVPETISKLAKADIKIWVLTGDKKETAENIGFACELLTEDTTICYGEDINSLLHARMENQRNRGGVYAKFAPPVQESFFPPGGNRALIITGSWLNEILLEKKTKRNKILKLKFPRTEEERRMRTQSKRRLEAKKEQRQKNFVDLACECSAVICCRVTPKQKAMVVDLVKRYKKAITLAIGDGANDVNMIKTAHIGVGISGQEGMQAVMSSDYSFAQFRYLQRLLLVHGRWSYIRMCKFLRYFFYKNFAFTLVHFWYSFFNGYSAQTAYEDWFITLYNVLYTSLPVLLMGLLDQDVSDKLSLRFPGLYIVGQRDLLFNYKRFFVSLLHGVLTSMILFFIPLGAYLQTVGQDGEAPSDYQSFAVTIASALVITVNFQIGLDTSYWTFVNAFSIFGSIALYFGIMFDFHSAGIHVLFPSAFQFTGTASNALRQPYIWLTIILAVAVCLLPVVAIRFLSMTIWPSESDKIQKHRKRLKAEEQWQRRQQVFRRGVSTRRSAYAFSHQRGYADLISSGRSIRKKRSPLDAIVADGTAEYRRTGDS</sequence>
<dbReference type="EC" id="7.6.2.1" evidence="14 24"/>
<dbReference type="EMBL" id="AF038007">
    <property type="protein sequence ID" value="AAC63461.1"/>
    <property type="molecule type" value="mRNA"/>
</dbReference>
<dbReference type="EMBL" id="AC027097">
    <property type="status" value="NOT_ANNOTATED_CDS"/>
    <property type="molecule type" value="Genomic_DNA"/>
</dbReference>
<dbReference type="EMBL" id="AF032442">
    <property type="protein sequence ID" value="AAC04328.1"/>
    <property type="molecule type" value="mRNA"/>
</dbReference>
<dbReference type="EMBL" id="BC003534">
    <property type="protein sequence ID" value="AAH03534.1"/>
    <property type="molecule type" value="mRNA"/>
</dbReference>
<dbReference type="CCDS" id="CCDS11965.1"/>
<dbReference type="RefSeq" id="NP_001361314.1">
    <property type="nucleotide sequence ID" value="NM_001374385.1"/>
</dbReference>
<dbReference type="RefSeq" id="NP_005594.2">
    <property type="nucleotide sequence ID" value="NM_005603.6"/>
</dbReference>
<dbReference type="RefSeq" id="XP_006722544.1">
    <property type="nucleotide sequence ID" value="XM_006722481.3"/>
</dbReference>
<dbReference type="RefSeq" id="XP_011524324.1">
    <property type="nucleotide sequence ID" value="XM_011526022.2"/>
</dbReference>
<dbReference type="RefSeq" id="XP_047293497.1">
    <property type="nucleotide sequence ID" value="XM_047437541.1"/>
</dbReference>
<dbReference type="RefSeq" id="XP_047293498.1">
    <property type="nucleotide sequence ID" value="XM_047437542.1"/>
</dbReference>
<dbReference type="RefSeq" id="XP_047293499.1">
    <property type="nucleotide sequence ID" value="XM_047437543.1"/>
</dbReference>
<dbReference type="RefSeq" id="XP_047293500.1">
    <property type="nucleotide sequence ID" value="XM_047437544.1"/>
</dbReference>
<dbReference type="RefSeq" id="XP_047293501.1">
    <property type="nucleotide sequence ID" value="XM_047437545.1"/>
</dbReference>
<dbReference type="RefSeq" id="XP_047293502.1">
    <property type="nucleotide sequence ID" value="XM_047437546.1"/>
</dbReference>
<dbReference type="PDB" id="7PY4">
    <property type="method" value="EM"/>
    <property type="resolution" value="3.10 A"/>
    <property type="chains" value="A=1-1251"/>
</dbReference>
<dbReference type="PDB" id="7VGH">
    <property type="method" value="EM"/>
    <property type="resolution" value="3.39 A"/>
    <property type="chains" value="B=1-1251"/>
</dbReference>
<dbReference type="PDB" id="7VGI">
    <property type="method" value="EM"/>
    <property type="resolution" value="3.36 A"/>
    <property type="chains" value="B=1-1251"/>
</dbReference>
<dbReference type="PDB" id="7VGJ">
    <property type="method" value="EM"/>
    <property type="resolution" value="3.98 A"/>
    <property type="chains" value="A=1-1251"/>
</dbReference>
<dbReference type="PDB" id="8OX4">
    <property type="method" value="EM"/>
    <property type="resolution" value="3.40 A"/>
    <property type="chains" value="A=1-1185"/>
</dbReference>
<dbReference type="PDB" id="8OX5">
    <property type="method" value="EM"/>
    <property type="resolution" value="2.90 A"/>
    <property type="chains" value="A=1-1185"/>
</dbReference>
<dbReference type="PDB" id="8OX6">
    <property type="method" value="EM"/>
    <property type="resolution" value="2.39 A"/>
    <property type="chains" value="A=1-1185"/>
</dbReference>
<dbReference type="PDB" id="8OX7">
    <property type="method" value="EM"/>
    <property type="resolution" value="2.56 A"/>
    <property type="chains" value="A=1-1251"/>
</dbReference>
<dbReference type="PDB" id="8OX8">
    <property type="method" value="EM"/>
    <property type="resolution" value="2.98 A"/>
    <property type="chains" value="A=1-1251"/>
</dbReference>
<dbReference type="PDB" id="8OX9">
    <property type="method" value="EM"/>
    <property type="resolution" value="2.72 A"/>
    <property type="chains" value="A=1-1185"/>
</dbReference>
<dbReference type="PDB" id="8OXA">
    <property type="method" value="EM"/>
    <property type="resolution" value="2.76 A"/>
    <property type="chains" value="A=1-1185"/>
</dbReference>
<dbReference type="PDB" id="8OXB">
    <property type="method" value="EM"/>
    <property type="resolution" value="2.99 A"/>
    <property type="chains" value="A=1-1185"/>
</dbReference>
<dbReference type="PDB" id="8OXC">
    <property type="method" value="EM"/>
    <property type="resolution" value="2.58 A"/>
    <property type="chains" value="A=1-1185"/>
</dbReference>
<dbReference type="PDBsum" id="7PY4"/>
<dbReference type="PDBsum" id="7VGH"/>
<dbReference type="PDBsum" id="7VGI"/>
<dbReference type="PDBsum" id="7VGJ"/>
<dbReference type="PDBsum" id="8OX4"/>
<dbReference type="PDBsum" id="8OX5"/>
<dbReference type="PDBsum" id="8OX6"/>
<dbReference type="PDBsum" id="8OX7"/>
<dbReference type="PDBsum" id="8OX8"/>
<dbReference type="PDBsum" id="8OX9"/>
<dbReference type="PDBsum" id="8OXA"/>
<dbReference type="PDBsum" id="8OXB"/>
<dbReference type="PDBsum" id="8OXC"/>
<dbReference type="EMDB" id="EMD-13711"/>
<dbReference type="EMDB" id="EMD-17256"/>
<dbReference type="EMDB" id="EMD-17257"/>
<dbReference type="EMDB" id="EMD-17258"/>
<dbReference type="EMDB" id="EMD-17259"/>
<dbReference type="EMDB" id="EMD-17260"/>
<dbReference type="EMDB" id="EMD-17261"/>
<dbReference type="EMDB" id="EMD-17262"/>
<dbReference type="EMDB" id="EMD-17263"/>
<dbReference type="EMDB" id="EMD-17264"/>
<dbReference type="EMDB" id="EMD-31969"/>
<dbReference type="EMDB" id="EMD-31970"/>
<dbReference type="EMDB" id="EMD-31971"/>
<dbReference type="SMR" id="O43520"/>
<dbReference type="BioGRID" id="111227">
    <property type="interactions" value="8"/>
</dbReference>
<dbReference type="ComplexPortal" id="CPX-6282">
    <property type="entry name" value="ATP8B1-CDC50A P4-ATPase complex"/>
</dbReference>
<dbReference type="ComplexPortal" id="CPX-6283">
    <property type="entry name" value="ATP8B1-CDC50B P4-ATPase complex"/>
</dbReference>
<dbReference type="FunCoup" id="O43520">
    <property type="interactions" value="333"/>
</dbReference>
<dbReference type="IntAct" id="O43520">
    <property type="interactions" value="4"/>
</dbReference>
<dbReference type="STRING" id="9606.ENSP00000497896"/>
<dbReference type="SwissLipids" id="SLP:000000342"/>
<dbReference type="TCDB" id="3.A.3.8.11">
    <property type="family name" value="the p-type atpase (p-atpase) superfamily"/>
</dbReference>
<dbReference type="GlyGen" id="O43520">
    <property type="glycosylation" value="1 site"/>
</dbReference>
<dbReference type="iPTMnet" id="O43520"/>
<dbReference type="PhosphoSitePlus" id="O43520"/>
<dbReference type="SwissPalm" id="O43520"/>
<dbReference type="BioMuta" id="ATP8B1"/>
<dbReference type="jPOST" id="O43520"/>
<dbReference type="MassIVE" id="O43520"/>
<dbReference type="PaxDb" id="9606-ENSP00000445359"/>
<dbReference type="PeptideAtlas" id="O43520"/>
<dbReference type="ProteomicsDB" id="49008"/>
<dbReference type="Antibodypedia" id="9722">
    <property type="antibodies" value="50 antibodies from 12 providers"/>
</dbReference>
<dbReference type="DNASU" id="5205"/>
<dbReference type="Ensembl" id="ENST00000648908.2">
    <property type="protein sequence ID" value="ENSP00000497896.1"/>
    <property type="gene ID" value="ENSG00000081923.15"/>
</dbReference>
<dbReference type="GeneID" id="5205"/>
<dbReference type="KEGG" id="hsa:5205"/>
<dbReference type="MANE-Select" id="ENST00000648908.2">
    <property type="protein sequence ID" value="ENSP00000497896.1"/>
    <property type="RefSeq nucleotide sequence ID" value="NM_001374385.1"/>
    <property type="RefSeq protein sequence ID" value="NP_001361314.1"/>
</dbReference>
<dbReference type="UCSC" id="uc002lgw.5">
    <property type="organism name" value="human"/>
</dbReference>
<dbReference type="AGR" id="HGNC:3706"/>
<dbReference type="CTD" id="5205"/>
<dbReference type="DisGeNET" id="5205"/>
<dbReference type="GeneCards" id="ATP8B1"/>
<dbReference type="GeneReviews" id="ATP8B1"/>
<dbReference type="HGNC" id="HGNC:3706">
    <property type="gene designation" value="ATP8B1"/>
</dbReference>
<dbReference type="HPA" id="ENSG00000081923">
    <property type="expression patterns" value="Tissue enhanced (intestine)"/>
</dbReference>
<dbReference type="MalaCards" id="ATP8B1"/>
<dbReference type="MIM" id="147480">
    <property type="type" value="phenotype"/>
</dbReference>
<dbReference type="MIM" id="211600">
    <property type="type" value="phenotype"/>
</dbReference>
<dbReference type="MIM" id="243300">
    <property type="type" value="phenotype"/>
</dbReference>
<dbReference type="MIM" id="602397">
    <property type="type" value="gene"/>
</dbReference>
<dbReference type="neXtProt" id="NX_O43520"/>
<dbReference type="OpenTargets" id="ENSG00000081923"/>
<dbReference type="Orphanet" id="99960">
    <property type="disease" value="Benign recurrent intrahepatic cholestasis type 1"/>
</dbReference>
<dbReference type="Orphanet" id="69665">
    <property type="disease" value="Intrahepatic cholestasis of pregnancy"/>
</dbReference>
<dbReference type="Orphanet" id="79306">
    <property type="disease" value="Progressive familial intrahepatic cholestasis type 1"/>
</dbReference>
<dbReference type="PharmGKB" id="PA265"/>
<dbReference type="VEuPathDB" id="HostDB:ENSG00000081923"/>
<dbReference type="eggNOG" id="KOG0206">
    <property type="taxonomic scope" value="Eukaryota"/>
</dbReference>
<dbReference type="GeneTree" id="ENSGT00940000158002"/>
<dbReference type="HOGENOM" id="CLU_000846_3_2_1"/>
<dbReference type="InParanoid" id="O43520"/>
<dbReference type="OMA" id="YVYGQRN"/>
<dbReference type="OrthoDB" id="377733at2759"/>
<dbReference type="PAN-GO" id="O43520">
    <property type="GO annotations" value="5 GO annotations based on evolutionary models"/>
</dbReference>
<dbReference type="PhylomeDB" id="O43520"/>
<dbReference type="TreeFam" id="TF300654"/>
<dbReference type="BRENDA" id="7.6.2.1">
    <property type="organism ID" value="2681"/>
</dbReference>
<dbReference type="PathwayCommons" id="O43520"/>
<dbReference type="Reactome" id="R-HSA-936837">
    <property type="pathway name" value="Ion transport by P-type ATPases"/>
</dbReference>
<dbReference type="SignaLink" id="O43520"/>
<dbReference type="SIGNOR" id="O43520"/>
<dbReference type="BioGRID-ORCS" id="5205">
    <property type="hits" value="16 hits in 1148 CRISPR screens"/>
</dbReference>
<dbReference type="ChiTaRS" id="ATP8B1">
    <property type="organism name" value="human"/>
</dbReference>
<dbReference type="GeneWiki" id="ATP8B1"/>
<dbReference type="GenomeRNAi" id="5205"/>
<dbReference type="Pharos" id="O43520">
    <property type="development level" value="Tbio"/>
</dbReference>
<dbReference type="PRO" id="PR:O43520"/>
<dbReference type="Proteomes" id="UP000005640">
    <property type="component" value="Chromosome 18"/>
</dbReference>
<dbReference type="RNAct" id="O43520">
    <property type="molecule type" value="protein"/>
</dbReference>
<dbReference type="Bgee" id="ENSG00000081923">
    <property type="expression patterns" value="Expressed in cardia of stomach and 215 other cell types or tissues"/>
</dbReference>
<dbReference type="ExpressionAtlas" id="O43520">
    <property type="expression patterns" value="baseline and differential"/>
</dbReference>
<dbReference type="GO" id="GO:0016324">
    <property type="term" value="C:apical plasma membrane"/>
    <property type="evidence" value="ECO:0000314"/>
    <property type="project" value="UniProtKB"/>
</dbReference>
<dbReference type="GO" id="GO:0005829">
    <property type="term" value="C:cytosol"/>
    <property type="evidence" value="ECO:0000314"/>
    <property type="project" value="HPA"/>
</dbReference>
<dbReference type="GO" id="GO:0005783">
    <property type="term" value="C:endoplasmic reticulum"/>
    <property type="evidence" value="ECO:0000314"/>
    <property type="project" value="UniProtKB"/>
</dbReference>
<dbReference type="GO" id="GO:0005794">
    <property type="term" value="C:Golgi apparatus"/>
    <property type="evidence" value="ECO:0000314"/>
    <property type="project" value="UniProtKB"/>
</dbReference>
<dbReference type="GO" id="GO:0016604">
    <property type="term" value="C:nuclear body"/>
    <property type="evidence" value="ECO:0000314"/>
    <property type="project" value="HPA"/>
</dbReference>
<dbReference type="GO" id="GO:0005654">
    <property type="term" value="C:nucleoplasm"/>
    <property type="evidence" value="ECO:0000314"/>
    <property type="project" value="HPA"/>
</dbReference>
<dbReference type="GO" id="GO:1990531">
    <property type="term" value="C:phospholipid-translocating ATPase complex"/>
    <property type="evidence" value="ECO:0000314"/>
    <property type="project" value="UniProtKB"/>
</dbReference>
<dbReference type="GO" id="GO:0005886">
    <property type="term" value="C:plasma membrane"/>
    <property type="evidence" value="ECO:0000314"/>
    <property type="project" value="UniProtKB"/>
</dbReference>
<dbReference type="GO" id="GO:0032420">
    <property type="term" value="C:stereocilium"/>
    <property type="evidence" value="ECO:0007669"/>
    <property type="project" value="UniProtKB-SubCell"/>
</dbReference>
<dbReference type="GO" id="GO:0005802">
    <property type="term" value="C:trans-Golgi network"/>
    <property type="evidence" value="ECO:0000318"/>
    <property type="project" value="GO_Central"/>
</dbReference>
<dbReference type="GO" id="GO:0005524">
    <property type="term" value="F:ATP binding"/>
    <property type="evidence" value="ECO:0007669"/>
    <property type="project" value="UniProtKB-KW"/>
</dbReference>
<dbReference type="GO" id="GO:0016887">
    <property type="term" value="F:ATP hydrolysis activity"/>
    <property type="evidence" value="ECO:0007669"/>
    <property type="project" value="InterPro"/>
</dbReference>
<dbReference type="GO" id="GO:0140326">
    <property type="term" value="F:ATPase-coupled intramembrane lipid transporter activity"/>
    <property type="evidence" value="ECO:0000318"/>
    <property type="project" value="GO_Central"/>
</dbReference>
<dbReference type="GO" id="GO:1901612">
    <property type="term" value="F:cardiolipin binding"/>
    <property type="evidence" value="ECO:0007669"/>
    <property type="project" value="Ensembl"/>
</dbReference>
<dbReference type="GO" id="GO:0000287">
    <property type="term" value="F:magnesium ion binding"/>
    <property type="evidence" value="ECO:0007669"/>
    <property type="project" value="InterPro"/>
</dbReference>
<dbReference type="GO" id="GO:0140345">
    <property type="term" value="F:phosphatidylcholine flippase activity"/>
    <property type="evidence" value="ECO:0000314"/>
    <property type="project" value="UniProtKB"/>
</dbReference>
<dbReference type="GO" id="GO:0090554">
    <property type="term" value="F:phosphatidylcholine floppase activity"/>
    <property type="evidence" value="ECO:0007669"/>
    <property type="project" value="RHEA"/>
</dbReference>
<dbReference type="GO" id="GO:0140346">
    <property type="term" value="F:phosphatidylserine flippase activity"/>
    <property type="evidence" value="ECO:0000250"/>
    <property type="project" value="UniProtKB"/>
</dbReference>
<dbReference type="GO" id="GO:0090556">
    <property type="term" value="F:phosphatidylserine floppase activity"/>
    <property type="evidence" value="ECO:0007669"/>
    <property type="project" value="RHEA"/>
</dbReference>
<dbReference type="GO" id="GO:0045176">
    <property type="term" value="P:apical protein localization"/>
    <property type="evidence" value="ECO:0000315"/>
    <property type="project" value="UniProtKB"/>
</dbReference>
<dbReference type="GO" id="GO:0015721">
    <property type="term" value="P:bile acid and bile salt transport"/>
    <property type="evidence" value="ECO:0000303"/>
    <property type="project" value="UniProtKB"/>
</dbReference>
<dbReference type="GO" id="GO:0008206">
    <property type="term" value="P:bile acid metabolic process"/>
    <property type="evidence" value="ECO:0007669"/>
    <property type="project" value="Ensembl"/>
</dbReference>
<dbReference type="GO" id="GO:0007030">
    <property type="term" value="P:Golgi organization"/>
    <property type="evidence" value="ECO:0000318"/>
    <property type="project" value="GO_Central"/>
</dbReference>
<dbReference type="GO" id="GO:0060119">
    <property type="term" value="P:inner ear receptor cell development"/>
    <property type="evidence" value="ECO:0007669"/>
    <property type="project" value="Ensembl"/>
</dbReference>
<dbReference type="GO" id="GO:0034220">
    <property type="term" value="P:monoatomic ion transmembrane transport"/>
    <property type="evidence" value="ECO:0000304"/>
    <property type="project" value="Reactome"/>
</dbReference>
<dbReference type="GO" id="GO:0045892">
    <property type="term" value="P:negative regulation of DNA-templated transcription"/>
    <property type="evidence" value="ECO:0000315"/>
    <property type="project" value="UniProtKB"/>
</dbReference>
<dbReference type="GO" id="GO:0045332">
    <property type="term" value="P:phospholipid translocation"/>
    <property type="evidence" value="ECO:0000314"/>
    <property type="project" value="UniProtKB"/>
</dbReference>
<dbReference type="GO" id="GO:2001225">
    <property type="term" value="P:regulation of chloride transport"/>
    <property type="evidence" value="ECO:0000315"/>
    <property type="project" value="UniProtKB"/>
</dbReference>
<dbReference type="GO" id="GO:0032534">
    <property type="term" value="P:regulation of microvillus assembly"/>
    <property type="evidence" value="ECO:0000315"/>
    <property type="project" value="UniProtKB"/>
</dbReference>
<dbReference type="GO" id="GO:1903729">
    <property type="term" value="P:regulation of plasma membrane organization"/>
    <property type="evidence" value="ECO:0007669"/>
    <property type="project" value="Ensembl"/>
</dbReference>
<dbReference type="GO" id="GO:0007605">
    <property type="term" value="P:sensory perception of sound"/>
    <property type="evidence" value="ECO:0007669"/>
    <property type="project" value="UniProtKB-KW"/>
</dbReference>
<dbReference type="GO" id="GO:0021650">
    <property type="term" value="P:vestibulocochlear nerve formation"/>
    <property type="evidence" value="ECO:0007669"/>
    <property type="project" value="Ensembl"/>
</dbReference>
<dbReference type="GO" id="GO:0006855">
    <property type="term" value="P:xenobiotic transmembrane transport"/>
    <property type="evidence" value="ECO:0000314"/>
    <property type="project" value="UniProtKB"/>
</dbReference>
<dbReference type="CDD" id="cd02073">
    <property type="entry name" value="P-type_ATPase_APLT_Dnf-like"/>
    <property type="match status" value="1"/>
</dbReference>
<dbReference type="FunFam" id="3.40.1110.10:FF:000012">
    <property type="entry name" value="Phospholipid-transporting ATPase"/>
    <property type="match status" value="1"/>
</dbReference>
<dbReference type="FunFam" id="3.40.50.1000:FF:000001">
    <property type="entry name" value="Phospholipid-transporting ATPase IC"/>
    <property type="match status" value="1"/>
</dbReference>
<dbReference type="Gene3D" id="3.40.1110.10">
    <property type="entry name" value="Calcium-transporting ATPase, cytoplasmic domain N"/>
    <property type="match status" value="1"/>
</dbReference>
<dbReference type="Gene3D" id="2.70.150.10">
    <property type="entry name" value="Calcium-transporting ATPase, cytoplasmic transduction domain A"/>
    <property type="match status" value="1"/>
</dbReference>
<dbReference type="Gene3D" id="3.40.50.1000">
    <property type="entry name" value="HAD superfamily/HAD-like"/>
    <property type="match status" value="1"/>
</dbReference>
<dbReference type="InterPro" id="IPR023299">
    <property type="entry name" value="ATPase_P-typ_cyto_dom_N"/>
</dbReference>
<dbReference type="InterPro" id="IPR018303">
    <property type="entry name" value="ATPase_P-typ_P_site"/>
</dbReference>
<dbReference type="InterPro" id="IPR023298">
    <property type="entry name" value="ATPase_P-typ_TM_dom_sf"/>
</dbReference>
<dbReference type="InterPro" id="IPR008250">
    <property type="entry name" value="ATPase_P-typ_transduc_dom_A_sf"/>
</dbReference>
<dbReference type="InterPro" id="IPR036412">
    <property type="entry name" value="HAD-like_sf"/>
</dbReference>
<dbReference type="InterPro" id="IPR023214">
    <property type="entry name" value="HAD_sf"/>
</dbReference>
<dbReference type="InterPro" id="IPR006539">
    <property type="entry name" value="P-type_ATPase_IV"/>
</dbReference>
<dbReference type="InterPro" id="IPR032631">
    <property type="entry name" value="P-type_ATPase_N"/>
</dbReference>
<dbReference type="InterPro" id="IPR001757">
    <property type="entry name" value="P_typ_ATPase"/>
</dbReference>
<dbReference type="InterPro" id="IPR032630">
    <property type="entry name" value="P_typ_ATPase_c"/>
</dbReference>
<dbReference type="InterPro" id="IPR044492">
    <property type="entry name" value="P_typ_ATPase_HD_dom"/>
</dbReference>
<dbReference type="NCBIfam" id="TIGR01652">
    <property type="entry name" value="ATPase-Plipid"/>
    <property type="match status" value="1"/>
</dbReference>
<dbReference type="NCBIfam" id="TIGR01494">
    <property type="entry name" value="ATPase_P-type"/>
    <property type="match status" value="1"/>
</dbReference>
<dbReference type="PANTHER" id="PTHR24092:SF48">
    <property type="entry name" value="PHOSPHOLIPID-TRANSPORTING ATPASE IC"/>
    <property type="match status" value="1"/>
</dbReference>
<dbReference type="PANTHER" id="PTHR24092">
    <property type="entry name" value="PROBABLE PHOSPHOLIPID-TRANSPORTING ATPASE"/>
    <property type="match status" value="1"/>
</dbReference>
<dbReference type="Pfam" id="PF13246">
    <property type="entry name" value="Cation_ATPase"/>
    <property type="match status" value="1"/>
</dbReference>
<dbReference type="Pfam" id="PF00122">
    <property type="entry name" value="E1-E2_ATPase"/>
    <property type="match status" value="1"/>
</dbReference>
<dbReference type="Pfam" id="PF16212">
    <property type="entry name" value="PhoLip_ATPase_C"/>
    <property type="match status" value="1"/>
</dbReference>
<dbReference type="Pfam" id="PF16209">
    <property type="entry name" value="PhoLip_ATPase_N"/>
    <property type="match status" value="1"/>
</dbReference>
<dbReference type="PRINTS" id="PR00119">
    <property type="entry name" value="CATATPASE"/>
</dbReference>
<dbReference type="SFLD" id="SFLDS00003">
    <property type="entry name" value="Haloacid_Dehalogenase"/>
    <property type="match status" value="1"/>
</dbReference>
<dbReference type="SFLD" id="SFLDF00027">
    <property type="entry name" value="p-type_atpase"/>
    <property type="match status" value="1"/>
</dbReference>
<dbReference type="SUPFAM" id="SSF81653">
    <property type="entry name" value="Calcium ATPase, transduction domain A"/>
    <property type="match status" value="1"/>
</dbReference>
<dbReference type="SUPFAM" id="SSF81665">
    <property type="entry name" value="Calcium ATPase, transmembrane domain M"/>
    <property type="match status" value="1"/>
</dbReference>
<dbReference type="SUPFAM" id="SSF56784">
    <property type="entry name" value="HAD-like"/>
    <property type="match status" value="1"/>
</dbReference>
<dbReference type="SUPFAM" id="SSF81660">
    <property type="entry name" value="Metal cation-transporting ATPase, ATP-binding domain N"/>
    <property type="match status" value="1"/>
</dbReference>
<dbReference type="PROSITE" id="PS00154">
    <property type="entry name" value="ATPASE_E1_E2"/>
    <property type="match status" value="1"/>
</dbReference>
<organism>
    <name type="scientific">Homo sapiens</name>
    <name type="common">Human</name>
    <dbReference type="NCBI Taxonomy" id="9606"/>
    <lineage>
        <taxon>Eukaryota</taxon>
        <taxon>Metazoa</taxon>
        <taxon>Chordata</taxon>
        <taxon>Craniata</taxon>
        <taxon>Vertebrata</taxon>
        <taxon>Euteleostomi</taxon>
        <taxon>Mammalia</taxon>
        <taxon>Eutheria</taxon>
        <taxon>Euarchontoglires</taxon>
        <taxon>Primates</taxon>
        <taxon>Haplorrhini</taxon>
        <taxon>Catarrhini</taxon>
        <taxon>Hominidae</taxon>
        <taxon>Homo</taxon>
    </lineage>
</organism>
<protein>
    <recommendedName>
        <fullName evidence="28">Phospholipid-transporting ATPase IC</fullName>
        <ecNumber evidence="14 24">7.6.2.1</ecNumber>
    </recommendedName>
    <alternativeName>
        <fullName>ATPase class I type 8B member 1</fullName>
    </alternativeName>
    <alternativeName>
        <fullName>Familial intrahepatic cholestasis type 1</fullName>
    </alternativeName>
    <alternativeName>
        <fullName>P4-ATPase flippase complex alpha subunit ATP8B1</fullName>
    </alternativeName>
</protein>
<proteinExistence type="evidence at protein level"/>
<keyword id="KW-0002">3D-structure</keyword>
<keyword id="KW-0067">ATP-binding</keyword>
<keyword id="KW-1003">Cell membrane</keyword>
<keyword id="KW-0966">Cell projection</keyword>
<keyword id="KW-0225">Disease variant</keyword>
<keyword id="KW-0256">Endoplasmic reticulum</keyword>
<keyword id="KW-0333">Golgi apparatus</keyword>
<keyword id="KW-1009">Hearing</keyword>
<keyword id="KW-0988">Intrahepatic cholestasis</keyword>
<keyword id="KW-0445">Lipid transport</keyword>
<keyword id="KW-0460">Magnesium</keyword>
<keyword id="KW-0472">Membrane</keyword>
<keyword id="KW-0479">Metal-binding</keyword>
<keyword id="KW-0547">Nucleotide-binding</keyword>
<keyword id="KW-0597">Phosphoprotein</keyword>
<keyword id="KW-1267">Proteomics identification</keyword>
<keyword id="KW-1185">Reference proteome</keyword>
<keyword id="KW-1278">Translocase</keyword>
<keyword id="KW-0812">Transmembrane</keyword>
<keyword id="KW-1133">Transmembrane helix</keyword>
<keyword id="KW-0813">Transport</keyword>
<feature type="chain" id="PRO_0000046364" description="Phospholipid-transporting ATPase IC">
    <location>
        <begin position="1"/>
        <end position="1251"/>
    </location>
</feature>
<feature type="topological domain" description="Cytoplasmic" evidence="6">
    <location>
        <begin position="1"/>
        <end position="108"/>
    </location>
</feature>
<feature type="transmembrane region" description="Helical" evidence="6">
    <location>
        <begin position="109"/>
        <end position="130"/>
    </location>
</feature>
<feature type="topological domain" description="Exoplasmic loop" evidence="6">
    <location>
        <begin position="131"/>
        <end position="136"/>
    </location>
</feature>
<feature type="transmembrane region" description="Helical" evidence="6">
    <location>
        <begin position="137"/>
        <end position="156"/>
    </location>
</feature>
<feature type="topological domain" description="Cytoplasmic" evidence="6">
    <location>
        <begin position="157"/>
        <end position="340"/>
    </location>
</feature>
<feature type="transmembrane region" description="Helical" evidence="6">
    <location>
        <begin position="341"/>
        <end position="362"/>
    </location>
</feature>
<feature type="topological domain" description="Exoplasmic loop" evidence="6">
    <location>
        <begin position="363"/>
        <end position="389"/>
    </location>
</feature>
<feature type="transmembrane region" description="Helical" evidence="6">
    <location>
        <begin position="390"/>
        <end position="411"/>
    </location>
</feature>
<feature type="topological domain" description="Cytoplasmic" evidence="6">
    <location>
        <begin position="412"/>
        <end position="949"/>
    </location>
</feature>
<feature type="transmembrane region" description="Helical" evidence="6">
    <location>
        <begin position="950"/>
        <end position="970"/>
    </location>
</feature>
<feature type="topological domain" description="Exoplasmic loop" evidence="6">
    <location>
        <begin position="971"/>
        <end position="982"/>
    </location>
</feature>
<feature type="transmembrane region" description="Helical" evidence="6">
    <location>
        <begin position="983"/>
        <end position="1002"/>
    </location>
</feature>
<feature type="topological domain" description="Cytoplasmic" evidence="6">
    <location>
        <begin position="1003"/>
        <end position="1032"/>
    </location>
</feature>
<feature type="transmembrane region" description="Helical" evidence="6">
    <location>
        <begin position="1033"/>
        <end position="1054"/>
    </location>
</feature>
<feature type="topological domain" description="Exoplasmic loop" evidence="6">
    <location>
        <begin position="1055"/>
        <end position="1068"/>
    </location>
</feature>
<feature type="transmembrane region" description="Helical" evidence="6">
    <location>
        <begin position="1069"/>
        <end position="1091"/>
    </location>
</feature>
<feature type="topological domain" description="Cytoplasmic" evidence="6">
    <location>
        <begin position="1092"/>
        <end position="1097"/>
    </location>
</feature>
<feature type="transmembrane region" description="Helical" evidence="6">
    <location>
        <begin position="1098"/>
        <end position="1118"/>
    </location>
</feature>
<feature type="topological domain" description="Exoplasmic loop" evidence="6">
    <location>
        <begin position="1119"/>
        <end position="1138"/>
    </location>
</feature>
<feature type="transmembrane region" description="Helical" evidence="6">
    <location>
        <begin position="1139"/>
        <end position="1163"/>
    </location>
</feature>
<feature type="topological domain" description="Cytoplasmic" evidence="6">
    <location>
        <begin position="1164"/>
        <end position="1251"/>
    </location>
</feature>
<feature type="region of interest" description="Disordered" evidence="7">
    <location>
        <begin position="1"/>
        <end position="54"/>
    </location>
</feature>
<feature type="compositionally biased region" description="Acidic residues" evidence="7">
    <location>
        <begin position="25"/>
        <end position="35"/>
    </location>
</feature>
<feature type="compositionally biased region" description="Basic and acidic residues" evidence="7">
    <location>
        <begin position="43"/>
        <end position="54"/>
    </location>
</feature>
<feature type="active site" description="4-aspartylphosphate intermediate" evidence="4">
    <location>
        <position position="454"/>
    </location>
</feature>
<feature type="binding site" evidence="5">
    <location>
        <position position="454"/>
    </location>
    <ligand>
        <name>ATP</name>
        <dbReference type="ChEBI" id="CHEBI:30616"/>
    </ligand>
</feature>
<feature type="binding site" evidence="5">
    <location>
        <position position="454"/>
    </location>
    <ligand>
        <name>Mg(2+)</name>
        <dbReference type="ChEBI" id="CHEBI:18420"/>
    </ligand>
</feature>
<feature type="binding site" evidence="5">
    <location>
        <position position="455"/>
    </location>
    <ligand>
        <name>ATP</name>
        <dbReference type="ChEBI" id="CHEBI:30616"/>
    </ligand>
</feature>
<feature type="binding site" evidence="5">
    <location>
        <position position="456"/>
    </location>
    <ligand>
        <name>ATP</name>
        <dbReference type="ChEBI" id="CHEBI:30616"/>
    </ligand>
</feature>
<feature type="binding site" evidence="5">
    <location>
        <position position="456"/>
    </location>
    <ligand>
        <name>Mg(2+)</name>
        <dbReference type="ChEBI" id="CHEBI:18420"/>
    </ligand>
</feature>
<feature type="binding site" evidence="1">
    <location>
        <position position="555"/>
    </location>
    <ligand>
        <name>ATP</name>
        <dbReference type="ChEBI" id="CHEBI:30616"/>
    </ligand>
</feature>
<feature type="binding site" evidence="5">
    <location>
        <position position="596"/>
    </location>
    <ligand>
        <name>ATP</name>
        <dbReference type="ChEBI" id="CHEBI:30616"/>
    </ligand>
</feature>
<feature type="binding site" evidence="1">
    <location>
        <position position="619"/>
    </location>
    <ligand>
        <name>ATP</name>
        <dbReference type="ChEBI" id="CHEBI:30616"/>
    </ligand>
</feature>
<feature type="binding site" evidence="1">
    <location>
        <position position="652"/>
    </location>
    <ligand>
        <name>ATP</name>
        <dbReference type="ChEBI" id="CHEBI:30616"/>
    </ligand>
</feature>
<feature type="binding site" evidence="1">
    <location>
        <position position="732"/>
    </location>
    <ligand>
        <name>ATP</name>
        <dbReference type="ChEBI" id="CHEBI:30616"/>
    </ligand>
</feature>
<feature type="binding site" evidence="1">
    <location>
        <position position="733"/>
    </location>
    <ligand>
        <name>ATP</name>
        <dbReference type="ChEBI" id="CHEBI:30616"/>
    </ligand>
</feature>
<feature type="binding site" evidence="1">
    <location>
        <position position="734"/>
    </location>
    <ligand>
        <name>ATP</name>
        <dbReference type="ChEBI" id="CHEBI:30616"/>
    </ligand>
</feature>
<feature type="binding site" evidence="1">
    <location>
        <position position="867"/>
    </location>
    <ligand>
        <name>ATP</name>
        <dbReference type="ChEBI" id="CHEBI:30616"/>
    </ligand>
</feature>
<feature type="binding site" evidence="1">
    <location>
        <position position="873"/>
    </location>
    <ligand>
        <name>ATP</name>
        <dbReference type="ChEBI" id="CHEBI:30616"/>
    </ligand>
</feature>
<feature type="binding site" evidence="3">
    <location>
        <position position="893"/>
    </location>
    <ligand>
        <name>Mg(2+)</name>
        <dbReference type="ChEBI" id="CHEBI:18420"/>
    </ligand>
</feature>
<feature type="binding site" evidence="5">
    <location>
        <position position="896"/>
    </location>
    <ligand>
        <name>ATP</name>
        <dbReference type="ChEBI" id="CHEBI:30616"/>
    </ligand>
</feature>
<feature type="binding site" evidence="5">
    <location>
        <position position="897"/>
    </location>
    <ligand>
        <name>ATP</name>
        <dbReference type="ChEBI" id="CHEBI:30616"/>
    </ligand>
</feature>
<feature type="binding site" evidence="3">
    <location>
        <position position="897"/>
    </location>
    <ligand>
        <name>Mg(2+)</name>
        <dbReference type="ChEBI" id="CHEBI:18420"/>
    </ligand>
</feature>
<feature type="modified residue" description="Phosphoserine" evidence="2">
    <location>
        <position position="1223"/>
    </location>
</feature>
<feature type="sequence variant" id="VAR_043044" description="In ICP1; dbSNP:rs146599962." evidence="11">
    <original>N</original>
    <variation>T</variation>
    <location>
        <position position="45"/>
    </location>
</feature>
<feature type="sequence variant" id="VAR_043045" description="In BRIC1 and ICP1; uncertain significance; reduces interaction with TMEM30A; has no effect on PC flippase activity; dbSNP:rs34719006." evidence="9 12 15 24">
    <original>D</original>
    <variation>N</variation>
    <location>
        <position position="70"/>
    </location>
</feature>
<feature type="sequence variant" id="VAR_029271" description="In dbSNP:rs3745079.">
    <original>H</original>
    <variation>Q</variation>
    <location>
        <position position="78"/>
    </location>
</feature>
<feature type="sequence variant" id="VAR_043046" description="In PFIC1; loss of PC flippase activity." evidence="9 24">
    <original>L</original>
    <variation>P</variation>
    <location>
        <position position="127"/>
    </location>
</feature>
<feature type="sequence variant" id="VAR_043047" description="In ICP1; uncertain significance; dbSNP:rs56355310." evidence="11">
    <original>K</original>
    <variation>E</variation>
    <location>
        <position position="203"/>
    </location>
</feature>
<feature type="sequence variant" id="VAR_071045" description="In PFIC1; dbSNP:rs515726138." evidence="16">
    <original>P</original>
    <variation>T</variation>
    <location>
        <position position="209"/>
    </location>
</feature>
<feature type="sequence variant" id="VAR_008809" description="In PFIC1; dbSNP:rs121909099." evidence="26">
    <original>L</original>
    <variation>S</variation>
    <location>
        <position position="288"/>
    </location>
</feature>
<feature type="sequence variant" id="VAR_043048" description="In dbSNP:rs150860808." evidence="12">
    <original>F</original>
    <variation>I</variation>
    <location>
        <position position="305"/>
    </location>
</feature>
<feature type="sequence variant" id="VAR_043049" description="In BRIC1; dbSNP:rs111033609." evidence="9">
    <original>G</original>
    <variation>D</variation>
    <location>
        <position position="308"/>
    </location>
</feature>
<feature type="sequence variant" id="VAR_008810" description="In PFIC1; greatly reduced expression due to proteosomal degradation; abolishes interaction with TMEM30A; dbSNP:rs111033609." evidence="15 26">
    <original>G</original>
    <variation>V</variation>
    <location>
        <position position="308"/>
    </location>
</feature>
<feature type="sequence variant" id="VAR_043050" description="In BRIC1; loss of PC flippase activity; dbSNP:rs140665115." evidence="9 24">
    <original>I</original>
    <variation>F</variation>
    <location>
        <position position="344"/>
    </location>
</feature>
<feature type="sequence variant" id="VAR_043051" description="In dbSNP:rs2271260.">
    <original>R</original>
    <variation>H</variation>
    <location>
        <position position="384"/>
    </location>
</feature>
<feature type="sequence variant" id="VAR_043052" description="In dbSNP:rs34315917.">
    <original>I</original>
    <variation>V</variation>
    <location>
        <position position="393"/>
    </location>
</feature>
<feature type="sequence variant" id="VAR_043053" description="In PFIC1." evidence="9">
    <original>S</original>
    <variation>Y</variation>
    <location>
        <position position="403"/>
    </location>
</feature>
<feature type="sequence variant" id="VAR_043054" description="In PFIC1." evidence="9">
    <original>R</original>
    <variation>P</variation>
    <location>
        <position position="412"/>
    </location>
</feature>
<feature type="sequence variant" id="VAR_043055" description="In dbSNP:rs34018205." evidence="9">
    <original>E</original>
    <variation>A</variation>
    <location>
        <position position="429"/>
    </location>
</feature>
<feature type="sequence variant" id="VAR_043056" description="In BRIC1." evidence="9">
    <original>S</original>
    <variation>Y</variation>
    <location>
        <position position="453"/>
    </location>
</feature>
<feature type="sequence variant" id="VAR_043057" description="In BRIC1." evidence="9">
    <original>D</original>
    <variation>G</variation>
    <location>
        <position position="454"/>
    </location>
</feature>
<feature type="sequence variant" id="VAR_043058" description="In PFIC1; dbSNP:rs121909104." evidence="9">
    <original>T</original>
    <variation>M</variation>
    <location>
        <position position="456"/>
    </location>
</feature>
<feature type="sequence variant" id="VAR_043059" description="In PFIC1; dbSNP:rs147642236." evidence="9">
    <original>Y</original>
    <variation>H</variation>
    <location>
        <position position="500"/>
    </location>
</feature>
<feature type="sequence variant" id="VAR_043060" description="In PFIC1." evidence="9">
    <location>
        <position position="529"/>
    </location>
</feature>
<feature type="sequence variant" id="VAR_043061" description="In PFIC1." evidence="9">
    <original>H</original>
    <variation>L</variation>
    <location>
        <position position="535"/>
    </location>
</feature>
<feature type="sequence variant" id="VAR_015423" description="In PFIC1; greatly reduced expression due to proteosomal degradation; abolishes interaction with TMEM30A; dbSNP:rs121909101." evidence="8 9 15">
    <original>D</original>
    <variation>N</variation>
    <location>
        <position position="554"/>
    </location>
</feature>
<feature type="sequence variant" id="VAR_029272" description="In dbSNP:rs3745078.">
    <original>I</original>
    <variation>V</variation>
    <location>
        <position position="577"/>
    </location>
</feature>
<feature type="sequence variant" id="VAR_043062" description="In dbSNP:rs33963153.">
    <original>S</original>
    <variation>N</variation>
    <location>
        <position position="580"/>
    </location>
</feature>
<feature type="sequence variant" id="VAR_043063" description="In BRIC1; dbSNP:rs1202682161." evidence="9">
    <original>R</original>
    <variation>Q</variation>
    <location>
        <position position="600"/>
    </location>
</feature>
<feature type="sequence variant" id="VAR_043064" description="In BRIC1; dbSNP:rs780186596." evidence="9">
    <original>R</original>
    <variation>W</variation>
    <location>
        <position position="600"/>
    </location>
</feature>
<feature type="sequence variant" id="VAR_043065" description="In BRIC1; dbSNP:rs752045131." evidence="9">
    <original>R</original>
    <variation>W</variation>
    <location>
        <position position="628"/>
    </location>
</feature>
<feature type="sequence variant" id="VAR_008811" description="In PFIC1." evidence="26">
    <location>
        <begin position="645"/>
        <end position="699"/>
    </location>
</feature>
<feature type="sequence variant" id="VAR_008812" description="In BRIC1 and PFIC1; common mutation; reduces interaction with TMEM30A; dbSNP:rs121909100." evidence="9 15 26 27">
    <original>I</original>
    <variation>T</variation>
    <location>
        <position position="661"/>
    </location>
</feature>
<feature type="sequence variant" id="VAR_043066" description="In dbSNP:rs35470719.">
    <original>M</original>
    <variation>T</variation>
    <location>
        <position position="674"/>
    </location>
</feature>
<feature type="sequence variant" id="VAR_043067" description="In PFIC1; dbSNP:rs1337978497." evidence="9">
    <original>D</original>
    <variation>G</variation>
    <location>
        <position position="688"/>
    </location>
</feature>
<feature type="sequence variant" id="VAR_043068" description="In BRIC1; dbSNP:rs541474497." evidence="9">
    <original>I</original>
    <variation>T</variation>
    <location>
        <position position="694"/>
    </location>
</feature>
<feature type="sequence variant" id="VAR_043069" description="In PFIC1; dbSNP:rs1350369369." evidence="9">
    <original>G</original>
    <variation>R</variation>
    <location>
        <position position="733"/>
    </location>
</feature>
<feature type="sequence variant" id="VAR_008814" description="In BRIC1." evidence="26">
    <location>
        <begin position="795"/>
        <end position="797"/>
    </location>
</feature>
<feature type="sequence variant" id="VAR_043070" description="In dbSNP:rs34018300.">
    <original>K</original>
    <variation>N</variation>
    <location>
        <position position="814"/>
    </location>
</feature>
<feature type="sequence variant" id="VAR_043071" description="In PFIC1; dbSNP:rs773092889." evidence="9">
    <original>F</original>
    <variation>S</variation>
    <location>
        <position position="853"/>
    </location>
</feature>
<feature type="sequence variant" id="VAR_043072" description="In ICP1; reduces interaction with TMEM30A; dbSNP:rs121909103." evidence="12 15">
    <original>R</original>
    <variation>C</variation>
    <location>
        <position position="867"/>
    </location>
</feature>
<feature type="sequence variant" id="VAR_036499" description="In a breast cancer sample; somatic mutation; dbSNP:rs767398921." evidence="13">
    <original>A</original>
    <variation>V</variation>
    <location>
        <position position="886"/>
    </location>
</feature>
<feature type="sequence variant" id="VAR_008813" description="In PFIC1 and BRIC1; dbSNP:rs121909098." evidence="9 26">
    <original>G</original>
    <variation>R</variation>
    <location>
        <position position="892"/>
    </location>
</feature>
<feature type="sequence variant" id="VAR_029273" description="In dbSNP:rs12968116." evidence="11 12">
    <original>R</original>
    <variation>Q</variation>
    <location>
        <position position="952"/>
    </location>
</feature>
<feature type="sequence variant" id="VAR_071046" description="In PFIC1." evidence="22">
    <original>S</original>
    <variation>I</variation>
    <location>
        <position position="1012"/>
    </location>
</feature>
<feature type="sequence variant" id="VAR_043073" description="In PFIC1; greatly reduces interaction with TMEM30A; dbSNP:rs1438249656." evidence="9 15">
    <original>G</original>
    <variation>R</variation>
    <location>
        <position position="1040"/>
    </location>
</feature>
<feature type="sequence variant" id="VAR_055045" description="In dbSNP:rs222581." evidence="10 26">
    <original>A</original>
    <variation>T</variation>
    <location>
        <position position="1152"/>
    </location>
</feature>
<feature type="sequence variant" id="VAR_036500" description="In a breast cancer sample; somatic mutation; dbSNP:rs1396213143." evidence="13">
    <original>I</original>
    <variation>M</variation>
    <location>
        <position position="1178"/>
    </location>
</feature>
<feature type="mutagenesis site" description="Impaired PC flippase activity." evidence="24">
    <original>E</original>
    <variation>Q</variation>
    <location>
        <position position="234"/>
    </location>
</feature>
<feature type="mutagenesis site" description="Greatly reduced expression due to proteosomal degradation; abolishes interaction with TMEM30A." evidence="15">
    <original>D</original>
    <variation>A</variation>
    <location>
        <position position="454"/>
    </location>
</feature>
<feature type="sequence conflict" description="In Ref. 4; AAH03534." evidence="28" ref="4">
    <original>P</original>
    <variation>L</variation>
    <location>
        <position position="1016"/>
    </location>
</feature>
<feature type="strand" evidence="32">
    <location>
        <begin position="19"/>
        <end position="21"/>
    </location>
</feature>
<feature type="strand" evidence="37">
    <location>
        <begin position="64"/>
        <end position="67"/>
    </location>
</feature>
<feature type="helix" evidence="37">
    <location>
        <begin position="73"/>
        <end position="75"/>
    </location>
</feature>
<feature type="helix" evidence="37">
    <location>
        <begin position="77"/>
        <end position="79"/>
    </location>
</feature>
<feature type="strand" evidence="37">
    <location>
        <begin position="84"/>
        <end position="86"/>
    </location>
</feature>
<feature type="strand" evidence="37">
    <location>
        <begin position="90"/>
        <end position="92"/>
    </location>
</feature>
<feature type="strand" evidence="37">
    <location>
        <begin position="104"/>
        <end position="106"/>
    </location>
</feature>
<feature type="helix" evidence="36">
    <location>
        <begin position="108"/>
        <end position="115"/>
    </location>
</feature>
<feature type="helix" evidence="36">
    <location>
        <begin position="119"/>
        <end position="130"/>
    </location>
</feature>
<feature type="turn" evidence="36">
    <location>
        <begin position="134"/>
        <end position="136"/>
    </location>
</feature>
<feature type="helix" evidence="36">
    <location>
        <begin position="142"/>
        <end position="173"/>
    </location>
</feature>
<feature type="strand" evidence="39">
    <location>
        <begin position="177"/>
        <end position="181"/>
    </location>
</feature>
<feature type="strand" evidence="39">
    <location>
        <begin position="183"/>
        <end position="190"/>
    </location>
</feature>
<feature type="helix" evidence="37">
    <location>
        <begin position="191"/>
        <end position="193"/>
    </location>
</feature>
<feature type="strand" evidence="39">
    <location>
        <begin position="199"/>
        <end position="203"/>
    </location>
</feature>
<feature type="strand" evidence="39">
    <location>
        <begin position="210"/>
        <end position="219"/>
    </location>
</feature>
<feature type="helix" evidence="39">
    <location>
        <begin position="220"/>
        <end position="222"/>
    </location>
</feature>
<feature type="strand" evidence="39">
    <location>
        <begin position="223"/>
        <end position="227"/>
    </location>
</feature>
<feature type="turn" evidence="39">
    <location>
        <begin position="229"/>
        <end position="231"/>
    </location>
</feature>
<feature type="strand" evidence="39">
    <location>
        <begin position="238"/>
        <end position="241"/>
    </location>
</feature>
<feature type="helix" evidence="39">
    <location>
        <begin position="244"/>
        <end position="249"/>
    </location>
</feature>
<feature type="strand" evidence="38">
    <location>
        <begin position="250"/>
        <end position="252"/>
    </location>
</feature>
<feature type="helix" evidence="39">
    <location>
        <begin position="253"/>
        <end position="258"/>
    </location>
</feature>
<feature type="strand" evidence="37">
    <location>
        <begin position="262"/>
        <end position="265"/>
    </location>
</feature>
<feature type="strand" evidence="39">
    <location>
        <begin position="277"/>
        <end position="281"/>
    </location>
</feature>
<feature type="strand" evidence="39">
    <location>
        <begin position="284"/>
        <end position="288"/>
    </location>
</feature>
<feature type="helix" evidence="39">
    <location>
        <begin position="290"/>
        <end position="292"/>
    </location>
</feature>
<feature type="strand" evidence="39">
    <location>
        <begin position="299"/>
        <end position="312"/>
    </location>
</feature>
<feature type="helix" evidence="37">
    <location>
        <begin position="314"/>
        <end position="316"/>
    </location>
</feature>
<feature type="helix" evidence="39">
    <location>
        <begin position="318"/>
        <end position="321"/>
    </location>
</feature>
<feature type="helix" evidence="36">
    <location>
        <begin position="332"/>
        <end position="365"/>
    </location>
</feature>
<feature type="turn" evidence="36">
    <location>
        <begin position="366"/>
        <end position="369"/>
    </location>
</feature>
<feature type="helix" evidence="36">
    <location>
        <begin position="371"/>
        <end position="373"/>
    </location>
</feature>
<feature type="helix" evidence="36">
    <location>
        <begin position="381"/>
        <end position="395"/>
    </location>
</feature>
<feature type="helix" evidence="36">
    <location>
        <begin position="396"/>
        <end position="399"/>
    </location>
</feature>
<feature type="helix" evidence="36">
    <location>
        <begin position="404"/>
        <end position="421"/>
    </location>
</feature>
<feature type="helix" evidence="35">
    <location>
        <begin position="423"/>
        <end position="425"/>
    </location>
</feature>
<feature type="turn" evidence="36">
    <location>
        <begin position="428"/>
        <end position="431"/>
    </location>
</feature>
<feature type="strand" evidence="39">
    <location>
        <begin position="435"/>
        <end position="437"/>
    </location>
</feature>
<feature type="strand" evidence="33">
    <location>
        <begin position="439"/>
        <end position="441"/>
    </location>
</feature>
<feature type="helix" evidence="36">
    <location>
        <begin position="443"/>
        <end position="446"/>
    </location>
</feature>
<feature type="strand" evidence="36">
    <location>
        <begin position="450"/>
        <end position="453"/>
    </location>
</feature>
<feature type="turn" evidence="36">
    <location>
        <begin position="455"/>
        <end position="458"/>
    </location>
</feature>
<feature type="strand" evidence="39">
    <location>
        <begin position="460"/>
        <end position="471"/>
    </location>
</feature>
<feature type="strand" evidence="39">
    <location>
        <begin position="474"/>
        <end position="476"/>
    </location>
</feature>
<feature type="strand" evidence="34">
    <location>
        <begin position="486"/>
        <end position="488"/>
    </location>
</feature>
<feature type="strand" evidence="37">
    <location>
        <begin position="498"/>
        <end position="500"/>
    </location>
</feature>
<feature type="helix" evidence="39">
    <location>
        <begin position="511"/>
        <end position="518"/>
    </location>
</feature>
<feature type="helix" evidence="39">
    <location>
        <begin position="522"/>
        <end position="533"/>
    </location>
</feature>
<feature type="strand" evidence="37">
    <location>
        <begin position="538"/>
        <end position="540"/>
    </location>
</feature>
<feature type="strand" evidence="37">
    <location>
        <begin position="542"/>
        <end position="545"/>
    </location>
</feature>
<feature type="strand" evidence="37">
    <location>
        <begin position="547"/>
        <end position="549"/>
    </location>
</feature>
<feature type="strand" evidence="35">
    <location>
        <begin position="550"/>
        <end position="552"/>
    </location>
</feature>
<feature type="helix" evidence="39">
    <location>
        <begin position="553"/>
        <end position="564"/>
    </location>
</feature>
<feature type="strand" evidence="39">
    <location>
        <begin position="568"/>
        <end position="572"/>
    </location>
</feature>
<feature type="strand" evidence="39">
    <location>
        <begin position="574"/>
        <end position="581"/>
    </location>
</feature>
<feature type="strand" evidence="39">
    <location>
        <begin position="584"/>
        <end position="593"/>
    </location>
</feature>
<feature type="turn" evidence="39">
    <location>
        <begin position="598"/>
        <end position="600"/>
    </location>
</feature>
<feature type="strand" evidence="39">
    <location>
        <begin position="602"/>
        <end position="608"/>
    </location>
</feature>
<feature type="strand" evidence="39">
    <location>
        <begin position="610"/>
        <end position="612"/>
    </location>
</feature>
<feature type="strand" evidence="39">
    <location>
        <begin position="614"/>
        <end position="620"/>
    </location>
</feature>
<feature type="helix" evidence="39">
    <location>
        <begin position="622"/>
        <end position="626"/>
    </location>
</feature>
<feature type="helix" evidence="39">
    <location>
        <begin position="636"/>
        <end position="648"/>
    </location>
</feature>
<feature type="strand" evidence="39">
    <location>
        <begin position="655"/>
        <end position="658"/>
    </location>
</feature>
<feature type="helix" evidence="39">
    <location>
        <begin position="663"/>
        <end position="677"/>
    </location>
</feature>
<feature type="strand" evidence="37">
    <location>
        <begin position="680"/>
        <end position="682"/>
    </location>
</feature>
<feature type="helix" evidence="39">
    <location>
        <begin position="685"/>
        <end position="694"/>
    </location>
</feature>
<feature type="strand" evidence="39">
    <location>
        <begin position="697"/>
        <end position="710"/>
    </location>
</feature>
<feature type="helix" evidence="36">
    <location>
        <begin position="714"/>
        <end position="723"/>
    </location>
</feature>
<feature type="strand" evidence="36">
    <location>
        <begin position="727"/>
        <end position="730"/>
    </location>
</feature>
<feature type="helix" evidence="36">
    <location>
        <begin position="735"/>
        <end position="743"/>
    </location>
</feature>
<feature type="helix" evidence="36">
    <location>
        <begin position="745"/>
        <end position="748"/>
    </location>
</feature>
<feature type="strand" evidence="39">
    <location>
        <begin position="753"/>
        <end position="756"/>
    </location>
</feature>
<feature type="helix" evidence="39">
    <location>
        <begin position="758"/>
        <end position="770"/>
    </location>
</feature>
<feature type="strand" evidence="34">
    <location>
        <begin position="776"/>
        <end position="778"/>
    </location>
</feature>
<feature type="helix" evidence="39">
    <location>
        <begin position="793"/>
        <end position="796"/>
    </location>
</feature>
<feature type="strand" evidence="39">
    <location>
        <begin position="797"/>
        <end position="802"/>
    </location>
</feature>
<feature type="helix" evidence="39">
    <location>
        <begin position="803"/>
        <end position="810"/>
    </location>
</feature>
<feature type="turn" evidence="34">
    <location>
        <begin position="826"/>
        <end position="828"/>
    </location>
</feature>
<feature type="turn" evidence="34">
    <location>
        <begin position="831"/>
        <end position="833"/>
    </location>
</feature>
<feature type="turn" evidence="34">
    <location>
        <begin position="835"/>
        <end position="838"/>
    </location>
</feature>
<feature type="helix" evidence="39">
    <location>
        <begin position="840"/>
        <end position="858"/>
    </location>
</feature>
<feature type="strand" evidence="39">
    <location>
        <begin position="859"/>
        <end position="867"/>
    </location>
</feature>
<feature type="helix" evidence="36">
    <location>
        <begin position="870"/>
        <end position="884"/>
    </location>
</feature>
<feature type="strand" evidence="36">
    <location>
        <begin position="888"/>
        <end position="892"/>
    </location>
</feature>
<feature type="helix" evidence="36">
    <location>
        <begin position="895"/>
        <end position="897"/>
    </location>
</feature>
<feature type="helix" evidence="36">
    <location>
        <begin position="898"/>
        <end position="903"/>
    </location>
</feature>
<feature type="strand" evidence="36">
    <location>
        <begin position="904"/>
        <end position="909"/>
    </location>
</feature>
<feature type="turn" evidence="36">
    <location>
        <begin position="912"/>
        <end position="914"/>
    </location>
</feature>
<feature type="turn" evidence="39">
    <location>
        <begin position="917"/>
        <end position="921"/>
    </location>
</feature>
<feature type="strand" evidence="36">
    <location>
        <begin position="922"/>
        <end position="924"/>
    </location>
</feature>
<feature type="helix" evidence="36">
    <location>
        <begin position="929"/>
        <end position="931"/>
    </location>
</feature>
<feature type="helix" evidence="36">
    <location>
        <begin position="932"/>
        <end position="936"/>
    </location>
</feature>
<feature type="helix" evidence="36">
    <location>
        <begin position="939"/>
        <end position="962"/>
    </location>
</feature>
<feature type="helix" evidence="36">
    <location>
        <begin position="964"/>
        <end position="969"/>
    </location>
</feature>
<feature type="turn" evidence="36">
    <location>
        <begin position="970"/>
        <end position="973"/>
    </location>
</feature>
<feature type="helix" evidence="36">
    <location>
        <begin position="982"/>
        <end position="988"/>
    </location>
</feature>
<feature type="turn" evidence="36">
    <location>
        <begin position="989"/>
        <end position="993"/>
    </location>
</feature>
<feature type="helix" evidence="36">
    <location>
        <begin position="995"/>
        <end position="1003"/>
    </location>
</feature>
<feature type="helix" evidence="36">
    <location>
        <begin position="1009"/>
        <end position="1014"/>
    </location>
</feature>
<feature type="helix" evidence="36">
    <location>
        <begin position="1016"/>
        <end position="1019"/>
    </location>
</feature>
<feature type="helix" evidence="36">
    <location>
        <begin position="1020"/>
        <end position="1023"/>
    </location>
</feature>
<feature type="strand" evidence="39">
    <location>
        <begin position="1027"/>
        <end position="1029"/>
    </location>
</feature>
<feature type="helix" evidence="36">
    <location>
        <begin position="1031"/>
        <end position="1056"/>
    </location>
</feature>
<feature type="strand" evidence="36">
    <location>
        <begin position="1062"/>
        <end position="1064"/>
    </location>
</feature>
<feature type="helix" evidence="36">
    <location>
        <begin position="1069"/>
        <end position="1091"/>
    </location>
</feature>
<feature type="strand" evidence="36">
    <location>
        <begin position="1093"/>
        <end position="1096"/>
    </location>
</feature>
<feature type="helix" evidence="36">
    <location>
        <begin position="1097"/>
        <end position="1118"/>
    </location>
</feature>
<feature type="helix" evidence="36">
    <location>
        <begin position="1120"/>
        <end position="1125"/>
    </location>
</feature>
<feature type="turn" evidence="36">
    <location>
        <begin position="1127"/>
        <end position="1129"/>
    </location>
</feature>
<feature type="helix" evidence="36">
    <location>
        <begin position="1135"/>
        <end position="1139"/>
    </location>
</feature>
<feature type="strand" evidence="32">
    <location>
        <begin position="1140"/>
        <end position="1142"/>
    </location>
</feature>
<feature type="helix" evidence="36">
    <location>
        <begin position="1143"/>
        <end position="1155"/>
    </location>
</feature>
<feature type="helix" evidence="36">
    <location>
        <begin position="1158"/>
        <end position="1170"/>
    </location>
</feature>
<feature type="helix" evidence="36">
    <location>
        <begin position="1174"/>
        <end position="1180"/>
    </location>
</feature>
<feature type="turn" evidence="37">
    <location>
        <begin position="1181"/>
        <end position="1184"/>
    </location>
</feature>
<feature type="helix" evidence="32">
    <location>
        <begin position="1217"/>
        <end position="1222"/>
    </location>
</feature>
<feature type="turn" evidence="32">
    <location>
        <begin position="1223"/>
        <end position="1226"/>
    </location>
</feature>
<reference key="1">
    <citation type="journal article" date="1998" name="Nat. Genet.">
        <title>A gene encoding a P-type ATPase mutated in two forms of hereditary cholestasis.</title>
        <authorList>
            <person name="Bull L.N."/>
            <person name="van Eijk M.J.T."/>
            <person name="Pawlikowska L."/>
            <person name="DeYoung J.A."/>
            <person name="Juijn J.A."/>
            <person name="Liao M."/>
            <person name="Klomp L.W.J."/>
            <person name="Lomri N."/>
            <person name="Berger R."/>
            <person name="Scharschmidt B.F."/>
            <person name="Knisely A.S."/>
            <person name="Houwen R.H.J."/>
            <person name="Freimer N.B."/>
        </authorList>
    </citation>
    <scope>NUCLEOTIDE SEQUENCE [MRNA]</scope>
    <scope>VARIANTS PFIC1 SER-288; VAL-308; 645-ILE--ILE-699 DEL AND ARG-892</scope>
    <scope>VARIANTS BRIC1 THR-661 AND 795-GLY--ARG-797 DEL</scope>
    <scope>VARIANT THR-1152</scope>
    <source>
        <tissue>Intestine</tissue>
        <tissue>Liver</tissue>
    </source>
</reference>
<reference key="2">
    <citation type="journal article" date="2005" name="Nature">
        <title>DNA sequence and analysis of human chromosome 18.</title>
        <authorList>
            <person name="Nusbaum C."/>
            <person name="Zody M.C."/>
            <person name="Borowsky M.L."/>
            <person name="Kamal M."/>
            <person name="Kodira C.D."/>
            <person name="Taylor T.D."/>
            <person name="Whittaker C.A."/>
            <person name="Chang J.L."/>
            <person name="Cuomo C.A."/>
            <person name="Dewar K."/>
            <person name="FitzGerald M.G."/>
            <person name="Yang X."/>
            <person name="Abouelleil A."/>
            <person name="Allen N.R."/>
            <person name="Anderson S."/>
            <person name="Bloom T."/>
            <person name="Bugalter B."/>
            <person name="Butler J."/>
            <person name="Cook A."/>
            <person name="DeCaprio D."/>
            <person name="Engels R."/>
            <person name="Garber M."/>
            <person name="Gnirke A."/>
            <person name="Hafez N."/>
            <person name="Hall J.L."/>
            <person name="Norman C.H."/>
            <person name="Itoh T."/>
            <person name="Jaffe D.B."/>
            <person name="Kuroki Y."/>
            <person name="Lehoczky J."/>
            <person name="Lui A."/>
            <person name="Macdonald P."/>
            <person name="Mauceli E."/>
            <person name="Mikkelsen T.S."/>
            <person name="Naylor J.W."/>
            <person name="Nicol R."/>
            <person name="Nguyen C."/>
            <person name="Noguchi H."/>
            <person name="O'Leary S.B."/>
            <person name="Piqani B."/>
            <person name="Smith C.L."/>
            <person name="Talamas J.A."/>
            <person name="Topham K."/>
            <person name="Totoki Y."/>
            <person name="Toyoda A."/>
            <person name="Wain H.M."/>
            <person name="Young S.K."/>
            <person name="Zeng Q."/>
            <person name="Zimmer A.R."/>
            <person name="Fujiyama A."/>
            <person name="Hattori M."/>
            <person name="Birren B.W."/>
            <person name="Sakaki Y."/>
            <person name="Lander E.S."/>
        </authorList>
    </citation>
    <scope>NUCLEOTIDE SEQUENCE [LARGE SCALE GENOMIC DNA]</scope>
</reference>
<reference key="3">
    <citation type="journal article" date="1998" name="Genome Res.">
        <title>Multiple members of a third subfamily of P-type ATPases identified by genomic sequences and ESTs.</title>
        <authorList>
            <person name="Halleck M.S."/>
            <person name="Pradhan D."/>
            <person name="Blackman C.F."/>
            <person name="Berkes C."/>
            <person name="Williamson P.L."/>
            <person name="Schlegel R.A."/>
        </authorList>
    </citation>
    <scope>NUCLEOTIDE SEQUENCE [MRNA] OF 388-661</scope>
    <source>
        <tissue>Colon tumor</tissue>
    </source>
</reference>
<reference key="4">
    <citation type="journal article" date="2004" name="Genome Res.">
        <title>The status, quality, and expansion of the NIH full-length cDNA project: the Mammalian Gene Collection (MGC).</title>
        <authorList>
            <consortium name="The MGC Project Team"/>
        </authorList>
    </citation>
    <scope>NUCLEOTIDE SEQUENCE [LARGE SCALE MRNA] OF 359-1251</scope>
    <scope>VARIANT THR-1152</scope>
    <source>
        <tissue>Uterus</tissue>
    </source>
</reference>
<reference key="5">
    <citation type="journal article" date="2008" name="Hepatology">
        <title>ATP8B1 requires an accessory protein for endoplasmic reticulum exit and plasma membrane lipid flippase activity.</title>
        <authorList>
            <person name="Paulusma C.C."/>
            <person name="Folmer D.E."/>
            <person name="Ho-Mok K.S."/>
            <person name="de Waart D.R."/>
            <person name="Hilarius P.M."/>
            <person name="Verhoeven A.J."/>
            <person name="Oude Elferink R.P."/>
        </authorList>
    </citation>
    <scope>FUNCTION</scope>
    <scope>SUBUNIT</scope>
    <scope>SUBCELLULAR LOCATION</scope>
    <scope>CATALYTIC ACTIVITY</scope>
</reference>
<reference key="6">
    <citation type="journal article" date="2010" name="Biochem. Pharmacol.">
        <title>CDC50A plays a key role in the uptake of the anticancer drug perifosine in human carcinoma cells.</title>
        <authorList>
            <person name="Munoz-Martinez F."/>
            <person name="Torres C."/>
            <person name="Castanys S."/>
            <person name="Gamarro F."/>
        </authorList>
    </citation>
    <scope>FUNCTION</scope>
</reference>
<reference key="7">
    <citation type="journal article" date="2010" name="Hepatology">
        <title>A flippase-independent function of ATP8B1, the protein affected in familial intrahepatic cholestasis type 1, is required for apical protein expression and microvillus formation in polarized epithelial cells.</title>
        <authorList>
            <person name="Verhulst P.M."/>
            <person name="van der Velden L.M."/>
            <person name="Oorschot V."/>
            <person name="van Faassen E.E."/>
            <person name="Klumperman J."/>
            <person name="Houwen R.H."/>
            <person name="Pomorski T.G."/>
            <person name="Holthuis J.C."/>
            <person name="Klomp L.W."/>
        </authorList>
    </citation>
    <scope>FUNCTION</scope>
    <scope>SUBCELLULAR LOCATION</scope>
</reference>
<reference key="8">
    <citation type="journal article" date="2010" name="J. Biol. Chem.">
        <title>Heteromeric interactions required for abundance and subcellular localization of human CDC50 proteins and class 1 P4-ATPases.</title>
        <authorList>
            <person name="van der Velden L.M."/>
            <person name="Wichers C.G."/>
            <person name="van Breevoort A.E."/>
            <person name="Coleman J.A."/>
            <person name="Molday R.S."/>
            <person name="Berger R."/>
            <person name="Klomp L.W."/>
            <person name="van de Graaf S.F."/>
        </authorList>
    </citation>
    <scope>INTERACTION WITH TMEM30A AND TMEM30B</scope>
    <scope>SUBCELLULAR LOCATION</scope>
</reference>
<reference key="9">
    <citation type="journal article" date="2010" name="J. Biol. Chem.">
        <title>CDC50 proteins are critical components of the human class-1 P4-ATPase transport machinery.</title>
        <authorList>
            <person name="Bryde S."/>
            <person name="Hennrich H."/>
            <person name="Verhulst P.M."/>
            <person name="Devaux P.F."/>
            <person name="Lenoir G."/>
            <person name="Holthuis J.C."/>
        </authorList>
    </citation>
    <scope>INTERACTION WITH TMEM30A AND TMEM30B</scope>
    <scope>SUBCELLULAR LOCATION</scope>
</reference>
<reference key="10">
    <citation type="journal article" date="2011" name="J. Biol. Chem.">
        <title>ATP9B, a P4-ATPase (a putative aminophospholipid translocase), localizes to the trans-Golgi network in a CDC50 protein-independent manner.</title>
        <authorList>
            <person name="Takatsu H."/>
            <person name="Baba K."/>
            <person name="Shima T."/>
            <person name="Umino H."/>
            <person name="Kato U."/>
            <person name="Umeda M."/>
            <person name="Nakayama K."/>
            <person name="Shin H.W."/>
        </authorList>
    </citation>
    <scope>INTERACTION WITH TMEM30A AND TMEM30B</scope>
    <scope>SUBCELLULAR LOCATION</scope>
</reference>
<reference key="11">
    <citation type="journal article" date="2014" name="Biochim. Biophys. Acta">
        <title>The lipid flippase heterodimer ATP8B1-CDC50A is essential for surface expression of the apical sodium-dependent bile acid transporter (SLC10A2/ASBT) in intestinal Caco-2 cells.</title>
        <authorList>
            <person name="van der Mark V.A."/>
            <person name="de Waart D.R."/>
            <person name="Ho-Mok K.S."/>
            <person name="Tabbers M.M."/>
            <person name="Voogt H.W."/>
            <person name="Oude Elferink R.P."/>
            <person name="Knisely A.S."/>
            <person name="Paulusma C.C."/>
        </authorList>
    </citation>
    <scope>COMPONENT OF A P4-ATPASE FLIPPASE COMPLEX</scope>
    <scope>FUNCTION</scope>
</reference>
<reference key="12">
    <citation type="journal article" date="2014" name="J. Biol. Chem.">
        <title>Phospholipid flippase activities and substrate specificities of human type IV P-type ATPases localized to the plasma membrane.</title>
        <authorList>
            <person name="Takatsu H."/>
            <person name="Tanaka G."/>
            <person name="Segawa K."/>
            <person name="Suzuki J."/>
            <person name="Nagata S."/>
            <person name="Nakayama K."/>
            <person name="Shin H.W."/>
        </authorList>
    </citation>
    <scope>FUNCTION</scope>
    <scope>CATALYTIC ACTIVITY</scope>
    <scope>SUBCELLULAR LOCATION</scope>
    <scope>MUTAGENESIS OF GLU-234</scope>
    <scope>VARIANTS BRIC1 ASN-70 AND PHE-344</scope>
    <scope>VARIANT PFIC1 PRO-127</scope>
</reference>
<reference key="13">
    <citation type="journal article" date="2016" name="Biochim. Biophys. Acta">
        <title>The phospholipid flippase ATP8B1 mediates apical localization of the cystic fibrosis transmembrane regulator.</title>
        <authorList>
            <person name="van der Mark V.A."/>
            <person name="de Jonge H.R."/>
            <person name="Chang J.C."/>
            <person name="Ho-Mok K.S."/>
            <person name="Duijst S."/>
            <person name="Vidovic D."/>
            <person name="Carlon M.S."/>
            <person name="Oude Elferink R.P."/>
            <person name="Paulusma C.C."/>
        </authorList>
    </citation>
    <scope>FUNCTION</scope>
</reference>
<reference key="14">
    <citation type="journal article" date="1999" name="Hepatology">
        <title>Recurrent familial intrahepatic cholestasis in the Faeroe Islands. Phenotypic heterogeneity but genetic homogeneity.</title>
        <authorList>
            <person name="Tygstrup N."/>
            <person name="Steig B.A."/>
            <person name="Juijn J.A."/>
            <person name="Bull L.N."/>
            <person name="Houwen R.H.J."/>
        </authorList>
    </citation>
    <scope>VARIANT BRIC1 THR-661</scope>
</reference>
<reference key="15">
    <citation type="journal article" date="2000" name="Hepatology">
        <title>A missense mutation in FIC1 is associated with Greenland familial cholestasis.</title>
        <authorList>
            <person name="Klomp L.W.J."/>
            <person name="Bull L.N."/>
            <person name="Knisely A.S."/>
            <person name="van Der Doelen M.A."/>
            <person name="Juijn J.A."/>
            <person name="Berger R."/>
            <person name="Forget S."/>
            <person name="Nielsen I.-M."/>
            <person name="Eiberg H."/>
            <person name="Houwen R.H.J."/>
        </authorList>
    </citation>
    <scope>VARIANT PFIC1 ASN-554</scope>
</reference>
<reference key="16">
    <citation type="journal article" date="2004" name="Hepatology">
        <title>Characterization of mutations in ATP8B1 associated with hereditary cholestasis.</title>
        <authorList>
            <person name="Klomp L.W.J."/>
            <person name="Vargas J.C."/>
            <person name="van Mil S.W.C."/>
            <person name="Pawlikowska L."/>
            <person name="Strautnieks S.S."/>
            <person name="van Eijk M.J.T."/>
            <person name="Juijn J.A."/>
            <person name="Pabon-Pena C."/>
            <person name="Smith L.B."/>
            <person name="DeYoung J.A."/>
            <person name="Byrne J.A."/>
            <person name="Gombert J."/>
            <person name="van der Brugge G."/>
            <person name="Berger R."/>
            <person name="Jankowska I."/>
            <person name="Pawlowska J."/>
            <person name="Villa E."/>
            <person name="Knisely A.S."/>
            <person name="Thompson R.J."/>
            <person name="Freimer N.B."/>
            <person name="Houwen R.H.J."/>
            <person name="Bull L.N."/>
        </authorList>
    </citation>
    <scope>VARIANTS PFIC1 PRO-127; TYR-403; PRO-412; MET-456; HIS-500; PHE-529 DEL; LEU-535; ASN-554; THR-661; GLY-688; ARG-733; SER-853; ARG-892 AND ARG-1040</scope>
    <scope>VARIANTS BRIC1 ASN-70; ASP-308; PHE-344; TYR-453; GLY-454; TRP-600; GLN-600; TRP-628; THR-661; THR-694 AND ARG-892</scope>
    <scope>VARIANT ALA-429</scope>
</reference>
<reference key="17">
    <citation type="journal article" date="2005" name="Eur. J. Hum. Genet.">
        <title>Sequence variation in the ATP8B1 gene and intrahepatic cholestasis of pregnancy.</title>
        <authorList>
            <person name="Painter J.N."/>
            <person name="Savander M."/>
            <person name="Ropponen A."/>
            <person name="Nupponen N."/>
            <person name="Riikonen S."/>
            <person name="Ylikorkala O."/>
            <person name="Lehesjoki A.E."/>
            <person name="Aittomaki K."/>
        </authorList>
    </citation>
    <scope>VARIANTS ICP1 THR-45 AND GLU-203</scope>
    <scope>VARIANT GLN-952</scope>
</reference>
<reference key="18">
    <citation type="journal article" date="2005" name="Gut">
        <title>ATP8B1 mutations in British cases with intrahepatic cholestasis of pregnancy.</title>
        <authorList>
            <person name="Muellenbach R."/>
            <person name="Bennett A."/>
            <person name="Tetlow N."/>
            <person name="Patel N."/>
            <person name="Hamilton G."/>
            <person name="Cheng F."/>
            <person name="Chambers J."/>
            <person name="Howard R."/>
            <person name="Taylor-Robinson S.D."/>
            <person name="Williamson C."/>
        </authorList>
    </citation>
    <scope>VARIANTS ICP1 ASN-70 AND CYS-867</scope>
    <scope>VARIANTS ILE-305 AND GLN-952</scope>
</reference>
<reference key="19">
    <citation type="journal article" date="2006" name="Science">
        <title>The consensus coding sequences of human breast and colorectal cancers.</title>
        <authorList>
            <person name="Sjoeblom T."/>
            <person name="Jones S."/>
            <person name="Wood L.D."/>
            <person name="Parsons D.W."/>
            <person name="Lin J."/>
            <person name="Barber T.D."/>
            <person name="Mandelker D."/>
            <person name="Leary R.J."/>
            <person name="Ptak J."/>
            <person name="Silliman N."/>
            <person name="Szabo S."/>
            <person name="Buckhaults P."/>
            <person name="Farrell C."/>
            <person name="Meeh P."/>
            <person name="Markowitz S.D."/>
            <person name="Willis J."/>
            <person name="Dawson D."/>
            <person name="Willson J.K.V."/>
            <person name="Gazdar A.F."/>
            <person name="Hartigan J."/>
            <person name="Wu L."/>
            <person name="Liu C."/>
            <person name="Parmigiani G."/>
            <person name="Park B.H."/>
            <person name="Bachman K.E."/>
            <person name="Papadopoulos N."/>
            <person name="Vogelstein B."/>
            <person name="Kinzler K.W."/>
            <person name="Velculescu V.E."/>
        </authorList>
    </citation>
    <scope>VARIANTS [LARGE SCALE ANALYSIS] VAL-886 AND MET-1178</scope>
</reference>
<reference key="20">
    <citation type="journal article" date="2009" name="Hepatology">
        <title>Differential effects of progressive familial intrahepatic cholestasis type 1 and benign recurrent intrahepatic cholestasis type 1 mutations on canalicular localization of ATP8B1.</title>
        <authorList>
            <person name="Folmer D.E."/>
            <person name="van der Mark V.A."/>
            <person name="Ho-Mok K.S."/>
            <person name="Oude Elferink R.P."/>
            <person name="Paulusma C.C."/>
        </authorList>
    </citation>
    <scope>CHARACTERIZATION OF VARIANTS PFIC1 VAL-308; ASN-554; THR-661 AND ARG-1040</scope>
    <scope>CHARACTERIZATION OF VARIANTS BRIC1 ASN-70 AND THR-661</scope>
    <scope>CHARACTERIZATION OF VARIANT ICP1 CYS-867</scope>
    <scope>MUTAGENESIS OF ASP-454</scope>
</reference>
<reference key="21">
    <citation type="journal article" date="2010" name="J. Pediatr. Gastroenterol. Nutr.">
        <title>Characterization of ATP8B1 gene mutations and a hot-linked mutation found in Chinese children with progressive intrahepatic cholestasis and low GGT.</title>
        <authorList>
            <person name="Liu L.Y."/>
            <person name="Wang X.H."/>
            <person name="Wang Z.L."/>
            <person name="Zhu Q.R."/>
            <person name="Wang J.S."/>
        </authorList>
    </citation>
    <scope>VARIANT PFIC1 THR-209</scope>
</reference>
<reference key="22">
    <citation type="journal article" date="2012" name="World J. Gastroenterol.">
        <title>Novel ATP8B1 mutation in an adult male with progressive familial intrahepatic cholestasis.</title>
        <authorList>
            <person name="Deng B.C."/>
            <person name="Lv S."/>
            <person name="Cui W."/>
            <person name="Zhao R."/>
            <person name="Lu X."/>
            <person name="Wu J."/>
            <person name="Liu P."/>
        </authorList>
    </citation>
    <scope>VARIANT PFIC1 ILE-1012</scope>
</reference>
<evidence type="ECO:0000250" key="1">
    <source>
        <dbReference type="UniProtKB" id="P04191"/>
    </source>
</evidence>
<evidence type="ECO:0000250" key="2">
    <source>
        <dbReference type="UniProtKB" id="Q148W0"/>
    </source>
</evidence>
<evidence type="ECO:0000250" key="3">
    <source>
        <dbReference type="UniProtKB" id="Q8NB49"/>
    </source>
</evidence>
<evidence type="ECO:0000250" key="4">
    <source>
        <dbReference type="UniProtKB" id="Q9HD20"/>
    </source>
</evidence>
<evidence type="ECO:0000250" key="5">
    <source>
        <dbReference type="UniProtKB" id="Q9Y2Q0"/>
    </source>
</evidence>
<evidence type="ECO:0000255" key="6"/>
<evidence type="ECO:0000256" key="7">
    <source>
        <dbReference type="SAM" id="MobiDB-lite"/>
    </source>
</evidence>
<evidence type="ECO:0000269" key="8">
    <source>
    </source>
</evidence>
<evidence type="ECO:0000269" key="9">
    <source>
    </source>
</evidence>
<evidence type="ECO:0000269" key="10">
    <source>
    </source>
</evidence>
<evidence type="ECO:0000269" key="11">
    <source>
    </source>
</evidence>
<evidence type="ECO:0000269" key="12">
    <source>
    </source>
</evidence>
<evidence type="ECO:0000269" key="13">
    <source>
    </source>
</evidence>
<evidence type="ECO:0000269" key="14">
    <source>
    </source>
</evidence>
<evidence type="ECO:0000269" key="15">
    <source>
    </source>
</evidence>
<evidence type="ECO:0000269" key="16">
    <source>
    </source>
</evidence>
<evidence type="ECO:0000269" key="17">
    <source>
    </source>
</evidence>
<evidence type="ECO:0000269" key="18">
    <source>
    </source>
</evidence>
<evidence type="ECO:0000269" key="19">
    <source>
    </source>
</evidence>
<evidence type="ECO:0000269" key="20">
    <source>
    </source>
</evidence>
<evidence type="ECO:0000269" key="21">
    <source>
    </source>
</evidence>
<evidence type="ECO:0000269" key="22">
    <source>
    </source>
</evidence>
<evidence type="ECO:0000269" key="23">
    <source>
    </source>
</evidence>
<evidence type="ECO:0000269" key="24">
    <source>
    </source>
</evidence>
<evidence type="ECO:0000269" key="25">
    <source>
    </source>
</evidence>
<evidence type="ECO:0000269" key="26">
    <source>
    </source>
</evidence>
<evidence type="ECO:0000269" key="27">
    <source>
    </source>
</evidence>
<evidence type="ECO:0000305" key="28"/>
<evidence type="ECO:0000305" key="29">
    <source>
    </source>
</evidence>
<evidence type="ECO:0000305" key="30">
    <source>
    </source>
</evidence>
<evidence type="ECO:0000312" key="31">
    <source>
        <dbReference type="HGNC" id="HGNC:3706"/>
    </source>
</evidence>
<evidence type="ECO:0007829" key="32">
    <source>
        <dbReference type="PDB" id="7PY4"/>
    </source>
</evidence>
<evidence type="ECO:0007829" key="33">
    <source>
        <dbReference type="PDB" id="7VGH"/>
    </source>
</evidence>
<evidence type="ECO:0007829" key="34">
    <source>
        <dbReference type="PDB" id="7VGI"/>
    </source>
</evidence>
<evidence type="ECO:0007829" key="35">
    <source>
        <dbReference type="PDB" id="8OX5"/>
    </source>
</evidence>
<evidence type="ECO:0007829" key="36">
    <source>
        <dbReference type="PDB" id="8OX6"/>
    </source>
</evidence>
<evidence type="ECO:0007829" key="37">
    <source>
        <dbReference type="PDB" id="8OX9"/>
    </source>
</evidence>
<evidence type="ECO:0007829" key="38">
    <source>
        <dbReference type="PDB" id="8OXA"/>
    </source>
</evidence>
<evidence type="ECO:0007829" key="39">
    <source>
        <dbReference type="PDB" id="8OXC"/>
    </source>
</evidence>
<accession>O43520</accession>
<accession>Q9BTP8</accession>
<name>AT8B1_HUMAN</name>